<name>YM057_YEAST</name>
<evidence type="ECO:0000255" key="1"/>
<evidence type="ECO:0000305" key="2"/>
<evidence type="ECO:0000305" key="3">
    <source>
    </source>
</evidence>
<gene>
    <name type="ordered locus">YML057C-A</name>
    <name type="ORF">YML058C-A</name>
</gene>
<comment type="subcellular location">
    <subcellularLocation>
        <location>Membrane</location>
        <topology>Multi-pass membrane protein</topology>
    </subcellularLocation>
</comment>
<comment type="miscellaneous">
    <text evidence="2">Partially overlaps CMP2.</text>
</comment>
<comment type="caution">
    <text evidence="3">Product of a dubious gene prediction unlikely to encode a functional protein. Because of that it is not part of the S.cerevisiae S288c complete/reference proteome set.</text>
</comment>
<reference key="1">
    <citation type="journal article" date="1997" name="Nature">
        <title>The nucleotide sequence of Saccharomyces cerevisiae chromosome XIII.</title>
        <authorList>
            <person name="Bowman S."/>
            <person name="Churcher C.M."/>
            <person name="Badcock K."/>
            <person name="Brown D."/>
            <person name="Chillingworth T."/>
            <person name="Connor R."/>
            <person name="Dedman K."/>
            <person name="Devlin K."/>
            <person name="Gentles S."/>
            <person name="Hamlin N."/>
            <person name="Hunt S."/>
            <person name="Jagels K."/>
            <person name="Lye G."/>
            <person name="Moule S."/>
            <person name="Odell C."/>
            <person name="Pearson D."/>
            <person name="Rajandream M.A."/>
            <person name="Rice P."/>
            <person name="Skelton J."/>
            <person name="Walsh S.V."/>
            <person name="Whitehead S."/>
            <person name="Barrell B.G."/>
        </authorList>
    </citation>
    <scope>NUCLEOTIDE SEQUENCE [LARGE SCALE GENOMIC DNA]</scope>
    <source>
        <strain>ATCC 204508 / S288c</strain>
    </source>
</reference>
<reference key="2">
    <citation type="journal article" date="2014" name="G3 (Bethesda)">
        <title>The reference genome sequence of Saccharomyces cerevisiae: Then and now.</title>
        <authorList>
            <person name="Engel S.R."/>
            <person name="Dietrich F.S."/>
            <person name="Fisk D.G."/>
            <person name="Binkley G."/>
            <person name="Balakrishnan R."/>
            <person name="Costanzo M.C."/>
            <person name="Dwight S.S."/>
            <person name="Hitz B.C."/>
            <person name="Karra K."/>
            <person name="Nash R.S."/>
            <person name="Weng S."/>
            <person name="Wong E.D."/>
            <person name="Lloyd P."/>
            <person name="Skrzypek M.S."/>
            <person name="Miyasato S.R."/>
            <person name="Simison M."/>
            <person name="Cherry J.M."/>
        </authorList>
    </citation>
    <scope>GENOME REANNOTATION</scope>
    <source>
        <strain>ATCC 204508 / S288c</strain>
    </source>
</reference>
<reference key="3">
    <citation type="journal article" date="2006" name="Proc. Natl. Acad. Sci. U.S.A.">
        <title>A global topology map of the Saccharomyces cerevisiae membrane proteome.</title>
        <authorList>
            <person name="Kim H."/>
            <person name="Melen K."/>
            <person name="Oesterberg M."/>
            <person name="von Heijne G."/>
        </authorList>
    </citation>
    <scope>TOPOLOGY [LARGE SCALE ANALYSIS]</scope>
    <source>
        <strain>ATCC 208353 / W303-1A</strain>
    </source>
</reference>
<keyword id="KW-0472">Membrane</keyword>
<keyword id="KW-0812">Transmembrane</keyword>
<keyword id="KW-1133">Transmembrane helix</keyword>
<sequence>MAGTLFIILRFVDTTLPSSRVYCVRSLEVSVAVELAAATVLAFESIGVVDDCGRSVLFSIILIAAFICSVFLIASEDIAGSRRSTGSCVTLWEGRNISFCLYRSNWLNTVPVGYMFFLRKNRSLDERYF</sequence>
<dbReference type="EMBL" id="Z46729">
    <property type="status" value="NOT_ANNOTATED_CDS"/>
    <property type="molecule type" value="Genomic_DNA"/>
</dbReference>
<dbReference type="STRING" id="4932.YML057C-A"/>
<dbReference type="PaxDb" id="4932-YML057C-A"/>
<dbReference type="TopDownProteomics" id="P0C261"/>
<dbReference type="EnsemblFungi" id="YML057C-A_mRNA">
    <property type="protein sequence ID" value="YML057C-A"/>
    <property type="gene ID" value="YML057C-A"/>
</dbReference>
<dbReference type="AGR" id="SGD:S000004522"/>
<dbReference type="SGD" id="S000004522">
    <property type="gene designation" value="YML057C-A"/>
</dbReference>
<dbReference type="HOGENOM" id="CLU_1993896_0_0_1"/>
<dbReference type="GO" id="GO:0016020">
    <property type="term" value="C:membrane"/>
    <property type="evidence" value="ECO:0007669"/>
    <property type="project" value="UniProtKB-SubCell"/>
</dbReference>
<accession>P0C261</accession>
<proteinExistence type="uncertain"/>
<organism>
    <name type="scientific">Saccharomyces cerevisiae (strain ATCC 204508 / S288c)</name>
    <name type="common">Baker's yeast</name>
    <dbReference type="NCBI Taxonomy" id="559292"/>
    <lineage>
        <taxon>Eukaryota</taxon>
        <taxon>Fungi</taxon>
        <taxon>Dikarya</taxon>
        <taxon>Ascomycota</taxon>
        <taxon>Saccharomycotina</taxon>
        <taxon>Saccharomycetes</taxon>
        <taxon>Saccharomycetales</taxon>
        <taxon>Saccharomycetaceae</taxon>
        <taxon>Saccharomyces</taxon>
    </lineage>
</organism>
<protein>
    <recommendedName>
        <fullName>Putative uncharacterized membrane protein YML057C-A</fullName>
    </recommendedName>
</protein>
<feature type="chain" id="PRO_0000262741" description="Putative uncharacterized membrane protein YML057C-A">
    <location>
        <begin position="1"/>
        <end position="129"/>
    </location>
</feature>
<feature type="topological domain" description="Cytoplasmic" evidence="1">
    <location>
        <begin position="1"/>
        <end position="28"/>
    </location>
</feature>
<feature type="transmembrane region" description="Helical" evidence="1">
    <location>
        <begin position="29"/>
        <end position="49"/>
    </location>
</feature>
<feature type="topological domain" description="Extracellular" evidence="1">
    <location>
        <begin position="50"/>
        <end position="54"/>
    </location>
</feature>
<feature type="transmembrane region" description="Helical" evidence="1">
    <location>
        <begin position="55"/>
        <end position="75"/>
    </location>
</feature>
<feature type="topological domain" description="Cytoplasmic" evidence="1">
    <location>
        <begin position="76"/>
        <end position="129"/>
    </location>
</feature>